<name>ADC_BURP1</name>
<accession>Q3JIC1</accession>
<sequence length="246" mass="27494">MKPSQVRSKAFAMPLTSPAFPMGPYRFVNREFLIITYRTDMDRLREIVPEPLEVKEPLVHYEFIRMPDSTGFGDYTESGQVIPVEYKGQPGGYTLAMYLNDHPPIAGGRELWGFPKKLAQPTLQTHIDTLLGTLDYGPVRVATGTMGYKHQELDLEEQAKRLAGANFLLKIIPHVDGSARVCELVRYYLQDIEMKGAWTGPASLQLAPHALAPVADLPVLEIVEARHLLADLTLGLGEVVYDYLAQ</sequence>
<feature type="chain" id="PRO_1000025637" description="Acetoacetate decarboxylase">
    <location>
        <begin position="1"/>
        <end position="246"/>
    </location>
</feature>
<feature type="active site" description="Schiff-base intermediate with acetoacetate" evidence="1">
    <location>
        <position position="116"/>
    </location>
</feature>
<protein>
    <recommendedName>
        <fullName evidence="1">Acetoacetate decarboxylase</fullName>
        <shortName evidence="1">AAD</shortName>
        <shortName evidence="1">ADC</shortName>
        <ecNumber evidence="1">4.1.1.4</ecNumber>
    </recommendedName>
</protein>
<keyword id="KW-0210">Decarboxylase</keyword>
<keyword id="KW-0456">Lyase</keyword>
<keyword id="KW-0704">Schiff base</keyword>
<organism>
    <name type="scientific">Burkholderia pseudomallei (strain 1710b)</name>
    <dbReference type="NCBI Taxonomy" id="320372"/>
    <lineage>
        <taxon>Bacteria</taxon>
        <taxon>Pseudomonadati</taxon>
        <taxon>Pseudomonadota</taxon>
        <taxon>Betaproteobacteria</taxon>
        <taxon>Burkholderiales</taxon>
        <taxon>Burkholderiaceae</taxon>
        <taxon>Burkholderia</taxon>
        <taxon>pseudomallei group</taxon>
    </lineage>
</organism>
<gene>
    <name evidence="1" type="primary">adc</name>
    <name type="ordered locus">BURPS1710b_A1525</name>
</gene>
<comment type="function">
    <text evidence="1">Catalyzes the conversion of acetoacetate to acetone and carbon dioxide.</text>
</comment>
<comment type="catalytic activity">
    <reaction evidence="1">
        <text>acetoacetate + H(+) = acetone + CO2</text>
        <dbReference type="Rhea" id="RHEA:19729"/>
        <dbReference type="ChEBI" id="CHEBI:13705"/>
        <dbReference type="ChEBI" id="CHEBI:15347"/>
        <dbReference type="ChEBI" id="CHEBI:15378"/>
        <dbReference type="ChEBI" id="CHEBI:16526"/>
        <dbReference type="EC" id="4.1.1.4"/>
    </reaction>
</comment>
<comment type="similarity">
    <text evidence="1">Belongs to the ADC family.</text>
</comment>
<reference key="1">
    <citation type="journal article" date="2010" name="Genome Biol. Evol.">
        <title>Continuing evolution of Burkholderia mallei through genome reduction and large-scale rearrangements.</title>
        <authorList>
            <person name="Losada L."/>
            <person name="Ronning C.M."/>
            <person name="DeShazer D."/>
            <person name="Woods D."/>
            <person name="Fedorova N."/>
            <person name="Kim H.S."/>
            <person name="Shabalina S.A."/>
            <person name="Pearson T.R."/>
            <person name="Brinkac L."/>
            <person name="Tan P."/>
            <person name="Nandi T."/>
            <person name="Crabtree J."/>
            <person name="Badger J."/>
            <person name="Beckstrom-Sternberg S."/>
            <person name="Saqib M."/>
            <person name="Schutzer S.E."/>
            <person name="Keim P."/>
            <person name="Nierman W.C."/>
        </authorList>
    </citation>
    <scope>NUCLEOTIDE SEQUENCE [LARGE SCALE GENOMIC DNA]</scope>
    <source>
        <strain>1710b</strain>
    </source>
</reference>
<evidence type="ECO:0000255" key="1">
    <source>
        <dbReference type="HAMAP-Rule" id="MF_00597"/>
    </source>
</evidence>
<dbReference type="EC" id="4.1.1.4" evidence="1"/>
<dbReference type="EMBL" id="CP000125">
    <property type="protein sequence ID" value="ABA52182.1"/>
    <property type="molecule type" value="Genomic_DNA"/>
</dbReference>
<dbReference type="RefSeq" id="WP_004194452.1">
    <property type="nucleotide sequence ID" value="NC_007435.1"/>
</dbReference>
<dbReference type="SMR" id="Q3JIC1"/>
<dbReference type="EnsemblBacteria" id="ABA52182">
    <property type="protein sequence ID" value="ABA52182"/>
    <property type="gene ID" value="BURPS1710b_A1525"/>
</dbReference>
<dbReference type="KEGG" id="bpm:BURPS1710b_A1525"/>
<dbReference type="HOGENOM" id="CLU_077089_0_0_4"/>
<dbReference type="Proteomes" id="UP000002700">
    <property type="component" value="Chromosome II"/>
</dbReference>
<dbReference type="GO" id="GO:0047602">
    <property type="term" value="F:acetoacetate decarboxylase activity"/>
    <property type="evidence" value="ECO:0007669"/>
    <property type="project" value="UniProtKB-UniRule"/>
</dbReference>
<dbReference type="Gene3D" id="2.40.400.10">
    <property type="entry name" value="Acetoacetate decarboxylase-like"/>
    <property type="match status" value="1"/>
</dbReference>
<dbReference type="HAMAP" id="MF_00597">
    <property type="entry name" value="ADC"/>
    <property type="match status" value="1"/>
</dbReference>
<dbReference type="InterPro" id="IPR010451">
    <property type="entry name" value="Acetoacetate_decarboxylase"/>
</dbReference>
<dbReference type="InterPro" id="IPR023653">
    <property type="entry name" value="Acetoacetate_decarboxylase_bac"/>
</dbReference>
<dbReference type="InterPro" id="IPR023375">
    <property type="entry name" value="ADC_dom_sf"/>
</dbReference>
<dbReference type="NCBIfam" id="NF002614">
    <property type="entry name" value="PRK02265.1"/>
    <property type="match status" value="1"/>
</dbReference>
<dbReference type="Pfam" id="PF06314">
    <property type="entry name" value="ADC"/>
    <property type="match status" value="1"/>
</dbReference>
<dbReference type="SUPFAM" id="SSF160104">
    <property type="entry name" value="Acetoacetate decarboxylase-like"/>
    <property type="match status" value="1"/>
</dbReference>
<proteinExistence type="inferred from homology"/>